<organism>
    <name type="scientific">Campylobacter jejuni subsp. jejuni serotype O:6 (strain 81116 / NCTC 11828)</name>
    <dbReference type="NCBI Taxonomy" id="407148"/>
    <lineage>
        <taxon>Bacteria</taxon>
        <taxon>Pseudomonadati</taxon>
        <taxon>Campylobacterota</taxon>
        <taxon>Epsilonproteobacteria</taxon>
        <taxon>Campylobacterales</taxon>
        <taxon>Campylobacteraceae</taxon>
        <taxon>Campylobacter</taxon>
    </lineage>
</organism>
<reference key="1">
    <citation type="journal article" date="2007" name="J. Bacteriol.">
        <title>The complete genome sequence of Campylobacter jejuni strain 81116 (NCTC11828).</title>
        <authorList>
            <person name="Pearson B.M."/>
            <person name="Gaskin D.J.H."/>
            <person name="Segers R.P.A.M."/>
            <person name="Wells J.M."/>
            <person name="Nuijten P.J.M."/>
            <person name="van Vliet A.H.M."/>
        </authorList>
    </citation>
    <scope>NUCLEOTIDE SEQUENCE [LARGE SCALE GENOMIC DNA]</scope>
    <source>
        <strain>81116 / NCTC 11828</strain>
    </source>
</reference>
<comment type="function">
    <text evidence="1">NAD-binding protein involved in the addition of a carboxymethylaminomethyl (cmnm) group at the wobble position (U34) of certain tRNAs, forming tRNA-cmnm(5)s(2)U34.</text>
</comment>
<comment type="cofactor">
    <cofactor evidence="1">
        <name>FAD</name>
        <dbReference type="ChEBI" id="CHEBI:57692"/>
    </cofactor>
</comment>
<comment type="subunit">
    <text evidence="1">Homodimer. Heterotetramer of two MnmE and two MnmG subunits.</text>
</comment>
<comment type="subcellular location">
    <subcellularLocation>
        <location evidence="1">Cytoplasm</location>
    </subcellularLocation>
</comment>
<comment type="similarity">
    <text evidence="1">Belongs to the MnmG family.</text>
</comment>
<accession>A8FMP4</accession>
<keyword id="KW-0963">Cytoplasm</keyword>
<keyword id="KW-0274">FAD</keyword>
<keyword id="KW-0285">Flavoprotein</keyword>
<keyword id="KW-0520">NAD</keyword>
<keyword id="KW-0819">tRNA processing</keyword>
<feature type="chain" id="PRO_1000071412" description="tRNA uridine 5-carboxymethylaminomethyl modification enzyme MnmG">
    <location>
        <begin position="1"/>
        <end position="619"/>
    </location>
</feature>
<feature type="binding site" evidence="1">
    <location>
        <begin position="8"/>
        <end position="13"/>
    </location>
    <ligand>
        <name>FAD</name>
        <dbReference type="ChEBI" id="CHEBI:57692"/>
    </ligand>
</feature>
<feature type="binding site" evidence="1">
    <location>
        <begin position="267"/>
        <end position="281"/>
    </location>
    <ligand>
        <name>NAD(+)</name>
        <dbReference type="ChEBI" id="CHEBI:57540"/>
    </ligand>
</feature>
<dbReference type="EMBL" id="CP000814">
    <property type="protein sequence ID" value="ABV52731.1"/>
    <property type="molecule type" value="Genomic_DNA"/>
</dbReference>
<dbReference type="RefSeq" id="WP_002877107.1">
    <property type="nucleotide sequence ID" value="NC_009839.1"/>
</dbReference>
<dbReference type="SMR" id="A8FMP4"/>
<dbReference type="KEGG" id="cju:C8J_1132"/>
<dbReference type="HOGENOM" id="CLU_007831_2_2_7"/>
<dbReference type="GO" id="GO:0005829">
    <property type="term" value="C:cytosol"/>
    <property type="evidence" value="ECO:0007669"/>
    <property type="project" value="TreeGrafter"/>
</dbReference>
<dbReference type="GO" id="GO:0050660">
    <property type="term" value="F:flavin adenine dinucleotide binding"/>
    <property type="evidence" value="ECO:0007669"/>
    <property type="project" value="UniProtKB-UniRule"/>
</dbReference>
<dbReference type="GO" id="GO:0030488">
    <property type="term" value="P:tRNA methylation"/>
    <property type="evidence" value="ECO:0007669"/>
    <property type="project" value="TreeGrafter"/>
</dbReference>
<dbReference type="GO" id="GO:0002098">
    <property type="term" value="P:tRNA wobble uridine modification"/>
    <property type="evidence" value="ECO:0007669"/>
    <property type="project" value="InterPro"/>
</dbReference>
<dbReference type="FunFam" id="1.10.150.570:FF:000001">
    <property type="entry name" value="tRNA uridine 5-carboxymethylaminomethyl modification enzyme MnmG"/>
    <property type="match status" value="1"/>
</dbReference>
<dbReference type="FunFam" id="3.50.50.60:FF:000002">
    <property type="entry name" value="tRNA uridine 5-carboxymethylaminomethyl modification enzyme MnmG"/>
    <property type="match status" value="1"/>
</dbReference>
<dbReference type="Gene3D" id="3.50.50.60">
    <property type="entry name" value="FAD/NAD(P)-binding domain"/>
    <property type="match status" value="2"/>
</dbReference>
<dbReference type="Gene3D" id="1.10.150.570">
    <property type="entry name" value="GidA associated domain, C-terminal subdomain"/>
    <property type="match status" value="1"/>
</dbReference>
<dbReference type="Gene3D" id="1.10.10.1800">
    <property type="entry name" value="tRNA uridine 5-carboxymethylaminomethyl modification enzyme MnmG/GidA"/>
    <property type="match status" value="1"/>
</dbReference>
<dbReference type="HAMAP" id="MF_00129">
    <property type="entry name" value="MnmG_GidA"/>
    <property type="match status" value="1"/>
</dbReference>
<dbReference type="InterPro" id="IPR036188">
    <property type="entry name" value="FAD/NAD-bd_sf"/>
</dbReference>
<dbReference type="InterPro" id="IPR049312">
    <property type="entry name" value="GIDA_C_N"/>
</dbReference>
<dbReference type="InterPro" id="IPR004416">
    <property type="entry name" value="MnmG"/>
</dbReference>
<dbReference type="InterPro" id="IPR002218">
    <property type="entry name" value="MnmG-rel"/>
</dbReference>
<dbReference type="InterPro" id="IPR020595">
    <property type="entry name" value="MnmG-rel_CS"/>
</dbReference>
<dbReference type="InterPro" id="IPR026904">
    <property type="entry name" value="MnmG_C"/>
</dbReference>
<dbReference type="InterPro" id="IPR047001">
    <property type="entry name" value="MnmG_C_subdom"/>
</dbReference>
<dbReference type="InterPro" id="IPR044920">
    <property type="entry name" value="MnmG_C_subdom_sf"/>
</dbReference>
<dbReference type="InterPro" id="IPR040131">
    <property type="entry name" value="MnmG_N"/>
</dbReference>
<dbReference type="NCBIfam" id="TIGR00136">
    <property type="entry name" value="mnmG_gidA"/>
    <property type="match status" value="1"/>
</dbReference>
<dbReference type="PANTHER" id="PTHR11806">
    <property type="entry name" value="GLUCOSE INHIBITED DIVISION PROTEIN A"/>
    <property type="match status" value="1"/>
</dbReference>
<dbReference type="PANTHER" id="PTHR11806:SF0">
    <property type="entry name" value="PROTEIN MTO1 HOMOLOG, MITOCHONDRIAL"/>
    <property type="match status" value="1"/>
</dbReference>
<dbReference type="Pfam" id="PF01134">
    <property type="entry name" value="GIDA"/>
    <property type="match status" value="1"/>
</dbReference>
<dbReference type="Pfam" id="PF21680">
    <property type="entry name" value="GIDA_C_1st"/>
    <property type="match status" value="1"/>
</dbReference>
<dbReference type="Pfam" id="PF13932">
    <property type="entry name" value="SAM_GIDA_C"/>
    <property type="match status" value="1"/>
</dbReference>
<dbReference type="SMART" id="SM01228">
    <property type="entry name" value="GIDA_assoc_3"/>
    <property type="match status" value="1"/>
</dbReference>
<dbReference type="SUPFAM" id="SSF51905">
    <property type="entry name" value="FAD/NAD(P)-binding domain"/>
    <property type="match status" value="1"/>
</dbReference>
<dbReference type="PROSITE" id="PS01280">
    <property type="entry name" value="GIDA_1"/>
    <property type="match status" value="1"/>
</dbReference>
<dbReference type="PROSITE" id="PS01281">
    <property type="entry name" value="GIDA_2"/>
    <property type="match status" value="1"/>
</dbReference>
<gene>
    <name evidence="1" type="primary">mnmG</name>
    <name evidence="1" type="synonym">gidA</name>
    <name type="ordered locus">C8J_1132</name>
</gene>
<name>MNMG_CAMJ8</name>
<protein>
    <recommendedName>
        <fullName evidence="1">tRNA uridine 5-carboxymethylaminomethyl modification enzyme MnmG</fullName>
    </recommendedName>
    <alternativeName>
        <fullName evidence="1">Glucose-inhibited division protein A</fullName>
    </alternativeName>
</protein>
<evidence type="ECO:0000255" key="1">
    <source>
        <dbReference type="HAMAP-Rule" id="MF_00129"/>
    </source>
</evidence>
<proteinExistence type="inferred from homology"/>
<sequence>MFDVIVIGGGHAGVEASAAAARMGKKTLLLTTLIEQIGAASCNPAIGGLAKGHLVKELDAMGGLMGEITDEAGIQFRILNESKGVAVQGSRAQIDMDKYRIIARNKLLKLPNLEISQEQASVLIVENDEVKGVKTNLENTYFAKKVILTTGTFLNGLIHVGENKLQAGRVGELASVNLGNYLQTLGLKMGRLKTGTCPRVDAKSIDFSVLEIQDGDVNPKAFSFRSKNFNPTQLPCYIARTNTTTHEIIKNNFYRAPLFTGQIEGVGPRYCPSIEDKINRFSDKESHHLFIEPQTIDATEYYINGFSTSLPYEVQIQMLRSVKGFEDAKITRFGYAIEYDYIEPTELKHTLELKKIKNLYCAGQINGTTGYEEAAAQGFMAGINASLSIDMKEPLILRRDEAYIGVLIDDLVVKGTKEPYRMFTSRAEFRLLLREENAILRLGKYGYDLGLLSEQDFTYIQNIANNLQKGLEFLLSKEFTPNNQNNAFLESLGEDKISSIVNLQKIVARASFDIEKLKKLDPMFETMDNYSLREILNEAKYYHYISMQKAQVEKMKNLSELKIPENFDFKSVSGLSNEVVEKLNHHKPPTIFAASQISGITPAALDILQIYIKMQKKKA</sequence>